<dbReference type="EC" id="2.3.2.18"/>
<dbReference type="EMBL" id="U23714">
    <property type="protein sequence ID" value="AAB41948.1"/>
    <property type="molecule type" value="Genomic_DNA"/>
</dbReference>
<dbReference type="PIR" id="JC5326">
    <property type="entry name" value="JC5326"/>
</dbReference>
<dbReference type="SMR" id="P95735"/>
<dbReference type="BRENDA" id="2.3.2.18">
    <property type="organism ID" value="5875"/>
</dbReference>
<dbReference type="GO" id="GO:0005737">
    <property type="term" value="C:cytoplasm"/>
    <property type="evidence" value="ECO:0007669"/>
    <property type="project" value="UniProtKB-SubCell"/>
</dbReference>
<dbReference type="GO" id="GO:0016755">
    <property type="term" value="F:aminoacyltransferase activity"/>
    <property type="evidence" value="ECO:0007669"/>
    <property type="project" value="InterPro"/>
</dbReference>
<dbReference type="GO" id="GO:0071555">
    <property type="term" value="P:cell wall organization"/>
    <property type="evidence" value="ECO:0007669"/>
    <property type="project" value="UniProtKB-KW"/>
</dbReference>
<dbReference type="GO" id="GO:0009252">
    <property type="term" value="P:peptidoglycan biosynthetic process"/>
    <property type="evidence" value="ECO:0007669"/>
    <property type="project" value="UniProtKB-KW"/>
</dbReference>
<dbReference type="GO" id="GO:0008360">
    <property type="term" value="P:regulation of cell shape"/>
    <property type="evidence" value="ECO:0007669"/>
    <property type="project" value="UniProtKB-KW"/>
</dbReference>
<dbReference type="Gene3D" id="1.20.58.90">
    <property type="match status" value="1"/>
</dbReference>
<dbReference type="Gene3D" id="3.40.630.30">
    <property type="match status" value="2"/>
</dbReference>
<dbReference type="InterPro" id="IPR016181">
    <property type="entry name" value="Acyl_CoA_acyltransferase"/>
</dbReference>
<dbReference type="InterPro" id="IPR003447">
    <property type="entry name" value="FEMABX"/>
</dbReference>
<dbReference type="InterPro" id="IPR050644">
    <property type="entry name" value="PG_Glycine_Bridge_Synth"/>
</dbReference>
<dbReference type="PANTHER" id="PTHR36174:SF2">
    <property type="entry name" value="AMINOACYLTRANSFERASE FEMA"/>
    <property type="match status" value="1"/>
</dbReference>
<dbReference type="PANTHER" id="PTHR36174">
    <property type="entry name" value="LIPID II:GLYCINE GLYCYLTRANSFERASE"/>
    <property type="match status" value="1"/>
</dbReference>
<dbReference type="Pfam" id="PF02388">
    <property type="entry name" value="FemAB"/>
    <property type="match status" value="1"/>
</dbReference>
<dbReference type="SUPFAM" id="SSF55729">
    <property type="entry name" value="Acyl-CoA N-acyltransferases (Nat)"/>
    <property type="match status" value="2"/>
</dbReference>
<dbReference type="PROSITE" id="PS51191">
    <property type="entry name" value="FEMABX"/>
    <property type="match status" value="1"/>
</dbReference>
<accession>P95735</accession>
<reference key="1">
    <citation type="journal article" date="1996" name="Gene">
        <title>Cloning and characterization of femA and femB from Staphylococcus epidermidis.</title>
        <authorList>
            <person name="Alborn W.E. Jr."/>
            <person name="Hoskins J."/>
            <person name="Uenal S."/>
            <person name="Flokowitsch J.E."/>
            <person name="Hayes C.A."/>
            <person name="Dotzlaf J.E."/>
            <person name="Yeh W.K."/>
            <person name="Skatrud P.L."/>
        </authorList>
    </citation>
    <scope>NUCLEOTIDE SEQUENCE [GENOMIC DNA]</scope>
    <source>
        <strain>ST335</strain>
    </source>
</reference>
<comment type="function">
    <text evidence="1">Catalyzes the incorporation of amino acid(s) into the interchain peptide bridge of peptidoglycan, using aminoacyl-tRNA as amino acid donor.</text>
</comment>
<comment type="catalytic activity">
    <reaction>
        <text>MurNAc-L-Ala-D-isoglutaminyl-L-Lys-(N(6)-tri-Gly)-D-Ala-D-Ala-diphospho-di-trans,octa-cis-undecaprenyl-GlcNAc + 2 glycyl-tRNA(Gly) = MurNAc-L-Ala-D-isoglutaminyl-L-Lys-(N(6)-penta-Gly)-D-Ala-D-Ala-diphospho-di-trans,octa-cis-undecaprenyl-GlcNAc + 2 tRNA(Gly) + 2 H(+)</text>
        <dbReference type="Rhea" id="RHEA:30443"/>
        <dbReference type="Rhea" id="RHEA-COMP:9664"/>
        <dbReference type="Rhea" id="RHEA-COMP:9683"/>
        <dbReference type="ChEBI" id="CHEBI:15378"/>
        <dbReference type="ChEBI" id="CHEBI:62235"/>
        <dbReference type="ChEBI" id="CHEBI:62236"/>
        <dbReference type="ChEBI" id="CHEBI:78442"/>
        <dbReference type="ChEBI" id="CHEBI:78522"/>
        <dbReference type="EC" id="2.3.2.18"/>
    </reaction>
</comment>
<comment type="subcellular location">
    <subcellularLocation>
        <location evidence="1">Cytoplasm</location>
    </subcellularLocation>
</comment>
<comment type="similarity">
    <text evidence="2">Belongs to the FemABX family.</text>
</comment>
<organism>
    <name type="scientific">Staphylococcus epidermidis</name>
    <dbReference type="NCBI Taxonomy" id="1282"/>
    <lineage>
        <taxon>Bacteria</taxon>
        <taxon>Bacillati</taxon>
        <taxon>Bacillota</taxon>
        <taxon>Bacilli</taxon>
        <taxon>Bacillales</taxon>
        <taxon>Staphylococcaceae</taxon>
        <taxon>Staphylococcus</taxon>
    </lineage>
</organism>
<gene>
    <name type="primary">femB</name>
</gene>
<feature type="chain" id="PRO_0000232605" description="Aminoacyltransferase FemB">
    <location>
        <begin position="1"/>
        <end position="417"/>
    </location>
</feature>
<protein>
    <recommendedName>
        <fullName>Aminoacyltransferase FemB</fullName>
        <ecNumber>2.3.2.18</ecNumber>
    </recommendedName>
    <alternativeName>
        <fullName>Factor essential for expression of methicillin resistance B</fullName>
    </alternativeName>
    <alternativeName>
        <fullName>N-acetylmuramoyl-L-alanyl-D-glutamyl-L-lysyl-(N6-triglycine)-D-alanyl-D-alanine-diphosphoundecaprenyl-N-acetylglucosamine:glycine glycyltransferase</fullName>
    </alternativeName>
</protein>
<name>FEMB_STAEP</name>
<evidence type="ECO:0000250" key="1"/>
<evidence type="ECO:0000305" key="2"/>
<sequence length="417" mass="49287">MKFTELTVKEFENFVQNPSLESHYFQVKENIATRESDGFQVVLLGVKDDDNRVIAASLFSKIPTMGSYVYYSNRGPVMDYSDLGLVDFYLKELDKYLHQHQCLYVKLDPYWLYQVYDKDINPLTEKNDALVNLFKSHGYDHHGFTTQYDSSSQVRWMGVLDLEGKTPASLRKEFDSQRKRNINKAINYGVKVRFLSKDEFGLFLDLYRETEARTGFASKTDDYFYNFIEHYGDKVLVPLAYIDLNEYIQHLQESLNDKENRRDDMMAKENKTDKQLKKIAELDKQIDHDKKELLQASELRQTDGEILNLASGVYFANAYEVNYFSGGSSEKYNQYMGPYAMHWHMINYCFDNGYDRYNFYGLSGDFTENSEDYGVYRFKRGFNVRIEELIGDFYKPINKVKYWLFNTLDRIRNKLKK</sequence>
<proteinExistence type="inferred from homology"/>
<keyword id="KW-0012">Acyltransferase</keyword>
<keyword id="KW-0133">Cell shape</keyword>
<keyword id="KW-0961">Cell wall biogenesis/degradation</keyword>
<keyword id="KW-0963">Cytoplasm</keyword>
<keyword id="KW-0573">Peptidoglycan synthesis</keyword>
<keyword id="KW-0808">Transferase</keyword>